<evidence type="ECO:0000255" key="1">
    <source>
        <dbReference type="HAMAP-Rule" id="MF_00393"/>
    </source>
</evidence>
<accession>B5Z182</accession>
<organism>
    <name type="scientific">Escherichia coli O157:H7 (strain EC4115 / EHEC)</name>
    <dbReference type="NCBI Taxonomy" id="444450"/>
    <lineage>
        <taxon>Bacteria</taxon>
        <taxon>Pseudomonadati</taxon>
        <taxon>Pseudomonadota</taxon>
        <taxon>Gammaproteobacteria</taxon>
        <taxon>Enterobacterales</taxon>
        <taxon>Enterobacteriaceae</taxon>
        <taxon>Escherichia</taxon>
    </lineage>
</organism>
<comment type="catalytic activity">
    <reaction evidence="1">
        <text>sn-glycerol 3-phosphate + an acyl-CoA = a 1-acyl-sn-glycero-3-phosphate + CoA</text>
        <dbReference type="Rhea" id="RHEA:15325"/>
        <dbReference type="ChEBI" id="CHEBI:57287"/>
        <dbReference type="ChEBI" id="CHEBI:57597"/>
        <dbReference type="ChEBI" id="CHEBI:57970"/>
        <dbReference type="ChEBI" id="CHEBI:58342"/>
        <dbReference type="EC" id="2.3.1.15"/>
    </reaction>
</comment>
<comment type="pathway">
    <text evidence="1">Phospholipid metabolism; CDP-diacylglycerol biosynthesis; CDP-diacylglycerol from sn-glycerol 3-phosphate: step 1/3.</text>
</comment>
<comment type="subcellular location">
    <subcellularLocation>
        <location evidence="1">Cell inner membrane</location>
        <topology evidence="1">Peripheral membrane protein</topology>
        <orientation evidence="1">Cytoplasmic side</orientation>
    </subcellularLocation>
</comment>
<comment type="domain">
    <text evidence="1">The HXXXXD motif is essential for acyltransferase activity and may constitute the binding site for the phosphate moiety of the glycerol-3-phosphate.</text>
</comment>
<comment type="similarity">
    <text evidence="1">Belongs to the GPAT/DAPAT family.</text>
</comment>
<reference key="1">
    <citation type="journal article" date="2011" name="Proc. Natl. Acad. Sci. U.S.A.">
        <title>Genomic anatomy of Escherichia coli O157:H7 outbreaks.</title>
        <authorList>
            <person name="Eppinger M."/>
            <person name="Mammel M.K."/>
            <person name="Leclerc J.E."/>
            <person name="Ravel J."/>
            <person name="Cebula T.A."/>
        </authorList>
    </citation>
    <scope>NUCLEOTIDE SEQUENCE [LARGE SCALE GENOMIC DNA]</scope>
    <source>
        <strain>EC4115 / EHEC</strain>
    </source>
</reference>
<protein>
    <recommendedName>
        <fullName evidence="1">Glycerol-3-phosphate acyltransferase</fullName>
        <shortName evidence="1">GPAT</shortName>
        <ecNumber evidence="1">2.3.1.15</ecNumber>
    </recommendedName>
</protein>
<sequence length="807" mass="91409">MSGWPRIYYKLLNLPLSILVKSKSIPADPAPELGLDTSRPIMYVLPYNSKADLLTLRAQCLAHDLPDPLEPLEIDGTLLPRYVFIHGGPRVFTYYTPKEESIKLFHDYLDLHRSNPNLDVQMVPVSVMFGRAPGREKGEVNPPLRMLNGVQKFFAVLWLGRDSFVRFSPSVSLRRMADEHGTDKTIAQKLARVARMHFARQRLAAVGPRLPARQDLFNKLLASRAIAKAVEDEARSKKISHEKAQQNAIALMEEIAANFSYEMIRLTDRILGFTWNRLYQGINVHNAERVRQLAHDGHELVYVPCHRSHMDYLLLSYVLYHQGLVPPHIAAGINLNFWPAGPIFRRLGAFFIRRTFKGNKLYSTVFREYLGELFSRGYSVEYFVEGGRSRTGRLLDPKTGTLSMTIQAMLRGGTRPITLIPIYIGYEHVMEVGTYAKELRGATKEKESLPQMLRGLSKLRNLGQGYVNFGEPMPLMTYLNQHVPDWRESIDPIEAVRPAWLTPTVNNIAADLMVRINNAGAANAMNLCCTALLASRQRSLTREQLTEQLNCYLDLMRNVPYSTDSTVPSASASELIDHALQMNKFEVEKDTIGDIIILPREQAVLMTYYRNNIAHMLVLPSLMAAIVTQHRHISRDVLMEHVNVLYPMLKAELFLRWDRDELPDVIDALANEMQRQGLITLQDDELHINPVHSRTLQLLAAGARETLQRYAITFWLLSANPSINRGTLEKESRTVAQRLSVLHGINAPEFFDKAVFSSLVLTLRDEGYISDSGDAEPAETMKVYQLLAELITSDVRLTIESATQGEG</sequence>
<gene>
    <name evidence="1" type="primary">plsB</name>
    <name type="ordered locus">ECH74115_5522</name>
</gene>
<dbReference type="EC" id="2.3.1.15" evidence="1"/>
<dbReference type="EMBL" id="CP001164">
    <property type="protein sequence ID" value="ACI38153.1"/>
    <property type="molecule type" value="Genomic_DNA"/>
</dbReference>
<dbReference type="RefSeq" id="WP_001301502.1">
    <property type="nucleotide sequence ID" value="NC_011353.1"/>
</dbReference>
<dbReference type="SMR" id="B5Z182"/>
<dbReference type="KEGG" id="ecf:ECH74115_5522"/>
<dbReference type="HOGENOM" id="CLU_015407_0_0_6"/>
<dbReference type="UniPathway" id="UPA00557">
    <property type="reaction ID" value="UER00612"/>
</dbReference>
<dbReference type="GO" id="GO:0005886">
    <property type="term" value="C:plasma membrane"/>
    <property type="evidence" value="ECO:0007669"/>
    <property type="project" value="UniProtKB-SubCell"/>
</dbReference>
<dbReference type="GO" id="GO:0004366">
    <property type="term" value="F:glycerol-3-phosphate O-acyltransferase activity"/>
    <property type="evidence" value="ECO:0007669"/>
    <property type="project" value="UniProtKB-UniRule"/>
</dbReference>
<dbReference type="GO" id="GO:0016024">
    <property type="term" value="P:CDP-diacylglycerol biosynthetic process"/>
    <property type="evidence" value="ECO:0007669"/>
    <property type="project" value="UniProtKB-UniRule"/>
</dbReference>
<dbReference type="GO" id="GO:0006631">
    <property type="term" value="P:fatty acid metabolic process"/>
    <property type="evidence" value="ECO:0007669"/>
    <property type="project" value="TreeGrafter"/>
</dbReference>
<dbReference type="CDD" id="cd07993">
    <property type="entry name" value="LPLAT_DHAPAT-like"/>
    <property type="match status" value="1"/>
</dbReference>
<dbReference type="HAMAP" id="MF_00393">
    <property type="entry name" value="Glyc3P_acyltrans"/>
    <property type="match status" value="1"/>
</dbReference>
<dbReference type="InterPro" id="IPR022284">
    <property type="entry name" value="GPAT/DHAPAT"/>
</dbReference>
<dbReference type="InterPro" id="IPR045520">
    <property type="entry name" value="GPAT/DHAPAT_C"/>
</dbReference>
<dbReference type="InterPro" id="IPR041728">
    <property type="entry name" value="GPAT/DHAPAT_LPLAT"/>
</dbReference>
<dbReference type="InterPro" id="IPR028354">
    <property type="entry name" value="GPAT_PlsB"/>
</dbReference>
<dbReference type="InterPro" id="IPR002123">
    <property type="entry name" value="Plipid/glycerol_acylTrfase"/>
</dbReference>
<dbReference type="NCBIfam" id="TIGR03703">
    <property type="entry name" value="plsB"/>
    <property type="match status" value="1"/>
</dbReference>
<dbReference type="NCBIfam" id="NF003441">
    <property type="entry name" value="PRK04974.1"/>
    <property type="match status" value="1"/>
</dbReference>
<dbReference type="PANTHER" id="PTHR12563:SF17">
    <property type="entry name" value="DIHYDROXYACETONE PHOSPHATE ACYLTRANSFERASE"/>
    <property type="match status" value="1"/>
</dbReference>
<dbReference type="PANTHER" id="PTHR12563">
    <property type="entry name" value="GLYCEROL-3-PHOSPHATE ACYLTRANSFERASE"/>
    <property type="match status" value="1"/>
</dbReference>
<dbReference type="Pfam" id="PF01553">
    <property type="entry name" value="Acyltransferase"/>
    <property type="match status" value="1"/>
</dbReference>
<dbReference type="Pfam" id="PF19277">
    <property type="entry name" value="GPAT_C"/>
    <property type="match status" value="1"/>
</dbReference>
<dbReference type="PIRSF" id="PIRSF500064">
    <property type="entry name" value="GPAT"/>
    <property type="match status" value="1"/>
</dbReference>
<dbReference type="PIRSF" id="PIRSF000437">
    <property type="entry name" value="GPAT_DHAPAT"/>
    <property type="match status" value="1"/>
</dbReference>
<dbReference type="SMART" id="SM00563">
    <property type="entry name" value="PlsC"/>
    <property type="match status" value="1"/>
</dbReference>
<dbReference type="SUPFAM" id="SSF69593">
    <property type="entry name" value="Glycerol-3-phosphate (1)-acyltransferase"/>
    <property type="match status" value="1"/>
</dbReference>
<feature type="chain" id="PRO_1000123076" description="Glycerol-3-phosphate acyltransferase">
    <location>
        <begin position="1"/>
        <end position="807"/>
    </location>
</feature>
<feature type="short sequence motif" description="HXXXXD motif">
    <location>
        <begin position="305"/>
        <end position="310"/>
    </location>
</feature>
<name>PLSB_ECO5E</name>
<keyword id="KW-0012">Acyltransferase</keyword>
<keyword id="KW-0997">Cell inner membrane</keyword>
<keyword id="KW-1003">Cell membrane</keyword>
<keyword id="KW-0444">Lipid biosynthesis</keyword>
<keyword id="KW-0443">Lipid metabolism</keyword>
<keyword id="KW-0472">Membrane</keyword>
<keyword id="KW-0594">Phospholipid biosynthesis</keyword>
<keyword id="KW-1208">Phospholipid metabolism</keyword>
<keyword id="KW-0808">Transferase</keyword>
<proteinExistence type="inferred from homology"/>